<comment type="function">
    <text evidence="1">DNA ligase that catalyzes the formation of phosphodiester linkages between 5'-phosphoryl and 3'-hydroxyl groups in double-stranded DNA using NAD as a coenzyme and as the energy source for the reaction. It is essential for DNA replication and repair of damaged DNA.</text>
</comment>
<comment type="catalytic activity">
    <reaction evidence="1">
        <text>NAD(+) + (deoxyribonucleotide)n-3'-hydroxyl + 5'-phospho-(deoxyribonucleotide)m = (deoxyribonucleotide)n+m + AMP + beta-nicotinamide D-nucleotide.</text>
        <dbReference type="EC" id="6.5.1.2"/>
    </reaction>
</comment>
<comment type="cofactor">
    <cofactor evidence="1">
        <name>Mg(2+)</name>
        <dbReference type="ChEBI" id="CHEBI:18420"/>
    </cofactor>
    <cofactor evidence="1">
        <name>Mn(2+)</name>
        <dbReference type="ChEBI" id="CHEBI:29035"/>
    </cofactor>
</comment>
<comment type="similarity">
    <text evidence="1">Belongs to the NAD-dependent DNA ligase family. LigA subfamily.</text>
</comment>
<comment type="sequence caution" evidence="3">
    <conflict type="erroneous initiation">
        <sequence resource="EMBL-CDS" id="ABB38890"/>
    </conflict>
    <text>Truncated N-terminus.</text>
</comment>
<sequence>MDRRGAPVKQDSAKVEQRMEELRTLLEYHGHRYYVMDEPEISDAEYDALFRELVRLEEEHPEHIHPGSPTHKVGGQILDGLKPREHSLRMYSLDNAFGIEEFREFVERVVRLEPDAPLEFWVDPKMDGLAMELVYENGVFLLAVTRGDGSMGEDVTHTMRTVRNVRMRLNPEIEAPVRLEVRGEVIITRADFEALNARQQQKGGKLFANPRNAAAGSVRQLDSSVAAARPLRFMAYGVGQVVWADGRQRWRTQYDIMRGLQELGFAVPSQGRLCAAPADVEAAFTELSAARHELPFEIDGVVAKLNDLDLQEALGFTARAPRWAIALKFPAHQARTRLKDIRIQVGRTGVMTPVAELEPVTVGGVTVSSATLHNEDEIRAKGLMLGDVVIVQRAGDVIPEVVRAVPEERTGAEREYVFPAVCPVCGSAAVRGEGEAAWRCTNMQCPAVRKQAIIHFVSKAGLDIDGVGRKWIEQLVDSGRVVSPADLFRITREDLLGMERMGEKLASNFIEAFDSARHESTLQRFICALGIRHVGEQTARTLAARFGNMDELMRADQETLQSLRDIGGEVAGSIRAFFANGQNRELLQQFKNLGLWPEEQQPAGDSTPVTPLAGKKILFTGSLVRMTRSEAKAMAEKAGAAVMSGVSARLDILVAGDKPGSKLEKARSLGITVLTEDEFIRQASESEEISGQAADDYENSLLRVQ</sequence>
<name>DNLJ_OLEA2</name>
<evidence type="ECO:0000255" key="1">
    <source>
        <dbReference type="HAMAP-Rule" id="MF_01588"/>
    </source>
</evidence>
<evidence type="ECO:0000256" key="2">
    <source>
        <dbReference type="SAM" id="MobiDB-lite"/>
    </source>
</evidence>
<evidence type="ECO:0000305" key="3"/>
<feature type="chain" id="PRO_0000313218" description="DNA ligase">
    <location>
        <begin position="1"/>
        <end position="705"/>
    </location>
</feature>
<feature type="domain" description="BRCT" evidence="1">
    <location>
        <begin position="607"/>
        <end position="696"/>
    </location>
</feature>
<feature type="region of interest" description="Disordered" evidence="2">
    <location>
        <begin position="684"/>
        <end position="705"/>
    </location>
</feature>
<feature type="active site" description="N6-AMP-lysine intermediate" evidence="1">
    <location>
        <position position="125"/>
    </location>
</feature>
<feature type="binding site" evidence="1">
    <location>
        <begin position="43"/>
        <end position="47"/>
    </location>
    <ligand>
        <name>NAD(+)</name>
        <dbReference type="ChEBI" id="CHEBI:57540"/>
    </ligand>
</feature>
<feature type="binding site" evidence="1">
    <location>
        <begin position="92"/>
        <end position="93"/>
    </location>
    <ligand>
        <name>NAD(+)</name>
        <dbReference type="ChEBI" id="CHEBI:57540"/>
    </ligand>
</feature>
<feature type="binding site" evidence="1">
    <location>
        <position position="123"/>
    </location>
    <ligand>
        <name>NAD(+)</name>
        <dbReference type="ChEBI" id="CHEBI:57540"/>
    </ligand>
</feature>
<feature type="binding site" evidence="1">
    <location>
        <position position="146"/>
    </location>
    <ligand>
        <name>NAD(+)</name>
        <dbReference type="ChEBI" id="CHEBI:57540"/>
    </ligand>
</feature>
<feature type="binding site" evidence="1">
    <location>
        <position position="184"/>
    </location>
    <ligand>
        <name>NAD(+)</name>
        <dbReference type="ChEBI" id="CHEBI:57540"/>
    </ligand>
</feature>
<feature type="binding site" evidence="1">
    <location>
        <position position="304"/>
    </location>
    <ligand>
        <name>NAD(+)</name>
        <dbReference type="ChEBI" id="CHEBI:57540"/>
    </ligand>
</feature>
<feature type="binding site" evidence="1">
    <location>
        <position position="328"/>
    </location>
    <ligand>
        <name>NAD(+)</name>
        <dbReference type="ChEBI" id="CHEBI:57540"/>
    </ligand>
</feature>
<feature type="binding site" evidence="1">
    <location>
        <position position="422"/>
    </location>
    <ligand>
        <name>Zn(2+)</name>
        <dbReference type="ChEBI" id="CHEBI:29105"/>
    </ligand>
</feature>
<feature type="binding site" evidence="1">
    <location>
        <position position="425"/>
    </location>
    <ligand>
        <name>Zn(2+)</name>
        <dbReference type="ChEBI" id="CHEBI:29105"/>
    </ligand>
</feature>
<feature type="binding site" evidence="1">
    <location>
        <position position="440"/>
    </location>
    <ligand>
        <name>Zn(2+)</name>
        <dbReference type="ChEBI" id="CHEBI:29105"/>
    </ligand>
</feature>
<feature type="binding site" evidence="1">
    <location>
        <position position="445"/>
    </location>
    <ligand>
        <name>Zn(2+)</name>
        <dbReference type="ChEBI" id="CHEBI:29105"/>
    </ligand>
</feature>
<reference key="1">
    <citation type="journal article" date="2011" name="J. Bacteriol.">
        <title>Complete genome sequence and updated annotation of Desulfovibrio alaskensis G20.</title>
        <authorList>
            <person name="Hauser L.J."/>
            <person name="Land M.L."/>
            <person name="Brown S.D."/>
            <person name="Larimer F."/>
            <person name="Keller K.L."/>
            <person name="Rapp-Giles B.J."/>
            <person name="Price M.N."/>
            <person name="Lin M."/>
            <person name="Bruce D.C."/>
            <person name="Detter J.C."/>
            <person name="Tapia R."/>
            <person name="Han C.S."/>
            <person name="Goodwin L.A."/>
            <person name="Cheng J.F."/>
            <person name="Pitluck S."/>
            <person name="Copeland A."/>
            <person name="Lucas S."/>
            <person name="Nolan M."/>
            <person name="Lapidus A.L."/>
            <person name="Palumbo A.V."/>
            <person name="Wall J.D."/>
        </authorList>
    </citation>
    <scope>NUCLEOTIDE SEQUENCE [LARGE SCALE GENOMIC DNA]</scope>
    <source>
        <strain>ATCC BAA-1058 / DSM 17464 / G20</strain>
    </source>
</reference>
<keyword id="KW-0227">DNA damage</keyword>
<keyword id="KW-0234">DNA repair</keyword>
<keyword id="KW-0235">DNA replication</keyword>
<keyword id="KW-0436">Ligase</keyword>
<keyword id="KW-0460">Magnesium</keyword>
<keyword id="KW-0464">Manganese</keyword>
<keyword id="KW-0479">Metal-binding</keyword>
<keyword id="KW-0520">NAD</keyword>
<keyword id="KW-1185">Reference proteome</keyword>
<keyword id="KW-0862">Zinc</keyword>
<dbReference type="EC" id="6.5.1.2" evidence="1"/>
<dbReference type="EMBL" id="CP000112">
    <property type="protein sequence ID" value="ABB38890.2"/>
    <property type="status" value="ALT_INIT"/>
    <property type="molecule type" value="Genomic_DNA"/>
</dbReference>
<dbReference type="SMR" id="Q30ZK6"/>
<dbReference type="STRING" id="207559.Dde_2093"/>
<dbReference type="KEGG" id="dde:Dde_2093"/>
<dbReference type="eggNOG" id="COG0272">
    <property type="taxonomic scope" value="Bacteria"/>
</dbReference>
<dbReference type="HOGENOM" id="CLU_007764_2_1_7"/>
<dbReference type="Proteomes" id="UP000002710">
    <property type="component" value="Chromosome"/>
</dbReference>
<dbReference type="GO" id="GO:0005829">
    <property type="term" value="C:cytosol"/>
    <property type="evidence" value="ECO:0007669"/>
    <property type="project" value="TreeGrafter"/>
</dbReference>
<dbReference type="GO" id="GO:0003677">
    <property type="term" value="F:DNA binding"/>
    <property type="evidence" value="ECO:0007669"/>
    <property type="project" value="InterPro"/>
</dbReference>
<dbReference type="GO" id="GO:0003911">
    <property type="term" value="F:DNA ligase (NAD+) activity"/>
    <property type="evidence" value="ECO:0007669"/>
    <property type="project" value="UniProtKB-UniRule"/>
</dbReference>
<dbReference type="GO" id="GO:0046872">
    <property type="term" value="F:metal ion binding"/>
    <property type="evidence" value="ECO:0007669"/>
    <property type="project" value="UniProtKB-KW"/>
</dbReference>
<dbReference type="GO" id="GO:0006281">
    <property type="term" value="P:DNA repair"/>
    <property type="evidence" value="ECO:0007669"/>
    <property type="project" value="UniProtKB-KW"/>
</dbReference>
<dbReference type="GO" id="GO:0006260">
    <property type="term" value="P:DNA replication"/>
    <property type="evidence" value="ECO:0007669"/>
    <property type="project" value="UniProtKB-KW"/>
</dbReference>
<dbReference type="CDD" id="cd17748">
    <property type="entry name" value="BRCT_DNA_ligase_like"/>
    <property type="match status" value="1"/>
</dbReference>
<dbReference type="CDD" id="cd00114">
    <property type="entry name" value="LIGANc"/>
    <property type="match status" value="1"/>
</dbReference>
<dbReference type="FunFam" id="1.10.150.20:FF:000006">
    <property type="entry name" value="DNA ligase"/>
    <property type="match status" value="1"/>
</dbReference>
<dbReference type="FunFam" id="1.10.150.20:FF:000007">
    <property type="entry name" value="DNA ligase"/>
    <property type="match status" value="1"/>
</dbReference>
<dbReference type="FunFam" id="1.10.287.610:FF:000002">
    <property type="entry name" value="DNA ligase"/>
    <property type="match status" value="1"/>
</dbReference>
<dbReference type="FunFam" id="2.40.50.140:FF:000012">
    <property type="entry name" value="DNA ligase"/>
    <property type="match status" value="1"/>
</dbReference>
<dbReference type="Gene3D" id="6.20.10.30">
    <property type="match status" value="1"/>
</dbReference>
<dbReference type="Gene3D" id="1.10.150.20">
    <property type="entry name" value="5' to 3' exonuclease, C-terminal subdomain"/>
    <property type="match status" value="2"/>
</dbReference>
<dbReference type="Gene3D" id="3.40.50.10190">
    <property type="entry name" value="BRCT domain"/>
    <property type="match status" value="1"/>
</dbReference>
<dbReference type="Gene3D" id="3.30.470.30">
    <property type="entry name" value="DNA ligase/mRNA capping enzyme"/>
    <property type="match status" value="1"/>
</dbReference>
<dbReference type="Gene3D" id="1.10.287.610">
    <property type="entry name" value="Helix hairpin bin"/>
    <property type="match status" value="1"/>
</dbReference>
<dbReference type="Gene3D" id="2.40.50.140">
    <property type="entry name" value="Nucleic acid-binding proteins"/>
    <property type="match status" value="1"/>
</dbReference>
<dbReference type="HAMAP" id="MF_01588">
    <property type="entry name" value="DNA_ligase_A"/>
    <property type="match status" value="1"/>
</dbReference>
<dbReference type="InterPro" id="IPR001357">
    <property type="entry name" value="BRCT_dom"/>
</dbReference>
<dbReference type="InterPro" id="IPR036420">
    <property type="entry name" value="BRCT_dom_sf"/>
</dbReference>
<dbReference type="InterPro" id="IPR041663">
    <property type="entry name" value="DisA/LigA_HHH"/>
</dbReference>
<dbReference type="InterPro" id="IPR001679">
    <property type="entry name" value="DNA_ligase"/>
</dbReference>
<dbReference type="InterPro" id="IPR018239">
    <property type="entry name" value="DNA_ligase_AS"/>
</dbReference>
<dbReference type="InterPro" id="IPR033136">
    <property type="entry name" value="DNA_ligase_CS"/>
</dbReference>
<dbReference type="InterPro" id="IPR013839">
    <property type="entry name" value="DNAligase_adenylation"/>
</dbReference>
<dbReference type="InterPro" id="IPR013840">
    <property type="entry name" value="DNAligase_N"/>
</dbReference>
<dbReference type="InterPro" id="IPR003583">
    <property type="entry name" value="Hlx-hairpin-Hlx_DNA-bd_motif"/>
</dbReference>
<dbReference type="InterPro" id="IPR012340">
    <property type="entry name" value="NA-bd_OB-fold"/>
</dbReference>
<dbReference type="InterPro" id="IPR004150">
    <property type="entry name" value="NAD_DNA_ligase_OB"/>
</dbReference>
<dbReference type="InterPro" id="IPR010994">
    <property type="entry name" value="RuvA_2-like"/>
</dbReference>
<dbReference type="InterPro" id="IPR004149">
    <property type="entry name" value="Znf_DNAligase_C4"/>
</dbReference>
<dbReference type="NCBIfam" id="TIGR00575">
    <property type="entry name" value="dnlj"/>
    <property type="match status" value="1"/>
</dbReference>
<dbReference type="NCBIfam" id="NF005932">
    <property type="entry name" value="PRK07956.1"/>
    <property type="match status" value="1"/>
</dbReference>
<dbReference type="PANTHER" id="PTHR23389">
    <property type="entry name" value="CHROMOSOME TRANSMISSION FIDELITY FACTOR 18"/>
    <property type="match status" value="1"/>
</dbReference>
<dbReference type="PANTHER" id="PTHR23389:SF9">
    <property type="entry name" value="DNA LIGASE"/>
    <property type="match status" value="1"/>
</dbReference>
<dbReference type="Pfam" id="PF00533">
    <property type="entry name" value="BRCT"/>
    <property type="match status" value="1"/>
</dbReference>
<dbReference type="Pfam" id="PF01653">
    <property type="entry name" value="DNA_ligase_aden"/>
    <property type="match status" value="1"/>
</dbReference>
<dbReference type="Pfam" id="PF03120">
    <property type="entry name" value="DNA_ligase_OB"/>
    <property type="match status" value="1"/>
</dbReference>
<dbReference type="Pfam" id="PF03119">
    <property type="entry name" value="DNA_ligase_ZBD"/>
    <property type="match status" value="1"/>
</dbReference>
<dbReference type="Pfam" id="PF12826">
    <property type="entry name" value="HHH_2"/>
    <property type="match status" value="1"/>
</dbReference>
<dbReference type="Pfam" id="PF14520">
    <property type="entry name" value="HHH_5"/>
    <property type="match status" value="1"/>
</dbReference>
<dbReference type="Pfam" id="PF22745">
    <property type="entry name" value="Nlig-Ia"/>
    <property type="match status" value="1"/>
</dbReference>
<dbReference type="PIRSF" id="PIRSF001604">
    <property type="entry name" value="LigA"/>
    <property type="match status" value="1"/>
</dbReference>
<dbReference type="SMART" id="SM00292">
    <property type="entry name" value="BRCT"/>
    <property type="match status" value="1"/>
</dbReference>
<dbReference type="SMART" id="SM00278">
    <property type="entry name" value="HhH1"/>
    <property type="match status" value="3"/>
</dbReference>
<dbReference type="SMART" id="SM00532">
    <property type="entry name" value="LIGANc"/>
    <property type="match status" value="1"/>
</dbReference>
<dbReference type="SUPFAM" id="SSF52113">
    <property type="entry name" value="BRCT domain"/>
    <property type="match status" value="1"/>
</dbReference>
<dbReference type="SUPFAM" id="SSF56091">
    <property type="entry name" value="DNA ligase/mRNA capping enzyme, catalytic domain"/>
    <property type="match status" value="1"/>
</dbReference>
<dbReference type="SUPFAM" id="SSF50249">
    <property type="entry name" value="Nucleic acid-binding proteins"/>
    <property type="match status" value="1"/>
</dbReference>
<dbReference type="SUPFAM" id="SSF47781">
    <property type="entry name" value="RuvA domain 2-like"/>
    <property type="match status" value="1"/>
</dbReference>
<dbReference type="PROSITE" id="PS50172">
    <property type="entry name" value="BRCT"/>
    <property type="match status" value="1"/>
</dbReference>
<dbReference type="PROSITE" id="PS01055">
    <property type="entry name" value="DNA_LIGASE_N1"/>
    <property type="match status" value="1"/>
</dbReference>
<dbReference type="PROSITE" id="PS01056">
    <property type="entry name" value="DNA_LIGASE_N2"/>
    <property type="match status" value="1"/>
</dbReference>
<protein>
    <recommendedName>
        <fullName evidence="1">DNA ligase</fullName>
        <ecNumber evidence="1">6.5.1.2</ecNumber>
    </recommendedName>
    <alternativeName>
        <fullName evidence="1">Polydeoxyribonucleotide synthase [NAD(+)]</fullName>
    </alternativeName>
</protein>
<gene>
    <name evidence="1" type="primary">ligA</name>
    <name type="ordered locus">Dde_2093</name>
</gene>
<organism>
    <name type="scientific">Oleidesulfovibrio alaskensis (strain ATCC BAA-1058 / DSM 17464 / G20)</name>
    <name type="common">Desulfovibrio alaskensis</name>
    <dbReference type="NCBI Taxonomy" id="207559"/>
    <lineage>
        <taxon>Bacteria</taxon>
        <taxon>Pseudomonadati</taxon>
        <taxon>Thermodesulfobacteriota</taxon>
        <taxon>Desulfovibrionia</taxon>
        <taxon>Desulfovibrionales</taxon>
        <taxon>Desulfovibrionaceae</taxon>
        <taxon>Oleidesulfovibrio</taxon>
    </lineage>
</organism>
<proteinExistence type="inferred from homology"/>
<accession>Q30ZK6</accession>